<gene>
    <name evidence="2" type="primary">ACOX1</name>
    <name evidence="5" type="synonym">PCOX1</name>
</gene>
<reference key="1">
    <citation type="submission" date="1998-04" db="EMBL/GenBank/DDBJ databases">
        <title>Molecular characterization of guinea pig peroxisomal palmitoyl-CoA oxidase 1.</title>
        <authorList>
            <person name="Baumgart E."/>
            <person name="Van Veldhoven P.P."/>
            <person name="Althoff B."/>
            <person name="Mannaerts G.P."/>
            <person name="Voelkl A."/>
            <person name="Fahimi D."/>
        </authorList>
    </citation>
    <scope>NUCLEOTIDE SEQUENCE [MRNA]</scope>
</reference>
<accession>Q9Z1N0</accession>
<protein>
    <recommendedName>
        <fullName evidence="2">Peroxisomal acyl-coenzyme A oxidase 1</fullName>
        <shortName evidence="2">AOX</shortName>
        <ecNumber evidence="1">1.3.3.6</ecNumber>
    </recommendedName>
    <alternativeName>
        <fullName evidence="5">Palmitoyl-CoA oxidase</fullName>
    </alternativeName>
    <alternativeName>
        <fullName>Peroxisomal fatty acyl-CoA oxidase</fullName>
    </alternativeName>
    <alternativeName>
        <fullName>Straight-chain acyl-CoA oxidase</fullName>
    </alternativeName>
    <component>
        <recommendedName>
            <fullName evidence="1">Peroxisomal acyl-CoA oxidase 1, A chain</fullName>
        </recommendedName>
    </component>
    <component>
        <recommendedName>
            <fullName evidence="1">Peroxisomal acyl-CoA oxidase 1, B chain</fullName>
        </recommendedName>
    </component>
    <component>
        <recommendedName>
            <fullName evidence="1">Peroxisomal acyl-CoA oxidase 1, C chain</fullName>
        </recommendedName>
    </component>
</protein>
<comment type="function">
    <text evidence="2">Involved in the initial and rate-limiting step of peroxisomal beta-oxidation of straight-chain saturated and unsaturated very-long-chain fatty acids. Catalyzes the desaturation of fatty acyl-CoAs such as palmitoyl-CoA (hexadecanoyl-CoA) to 2-trans-enoyl-CoAs ((2E)-enoyl-CoAs) such as (2E)-hexadecenoyl-CoA, and donates electrons directly to molecular oxygen (O(2)), thereby producing hydrogen peroxide (H(2)O(2)).</text>
</comment>
<comment type="catalytic activity">
    <reaction evidence="1">
        <text>a 2,3-saturated acyl-CoA + O2 = a (2E)-enoyl-CoA + H2O2</text>
        <dbReference type="Rhea" id="RHEA:38959"/>
        <dbReference type="ChEBI" id="CHEBI:15379"/>
        <dbReference type="ChEBI" id="CHEBI:16240"/>
        <dbReference type="ChEBI" id="CHEBI:58856"/>
        <dbReference type="ChEBI" id="CHEBI:65111"/>
        <dbReference type="EC" id="1.3.3.6"/>
    </reaction>
    <physiologicalReaction direction="left-to-right" evidence="1">
        <dbReference type="Rhea" id="RHEA:38960"/>
    </physiologicalReaction>
</comment>
<comment type="catalytic activity">
    <reaction evidence="2">
        <text>hexadecanoyl-CoA + O2 = (2E)-hexadecenoyl-CoA + H2O2</text>
        <dbReference type="Rhea" id="RHEA:40167"/>
        <dbReference type="ChEBI" id="CHEBI:15379"/>
        <dbReference type="ChEBI" id="CHEBI:16240"/>
        <dbReference type="ChEBI" id="CHEBI:57379"/>
        <dbReference type="ChEBI" id="CHEBI:61526"/>
    </reaction>
    <physiologicalReaction direction="left-to-right" evidence="2">
        <dbReference type="Rhea" id="RHEA:40168"/>
    </physiologicalReaction>
</comment>
<comment type="catalytic activity">
    <reaction evidence="2">
        <text>dodecanoyl-CoA + O2 = (2E)-dodecenoyl-CoA + H2O2</text>
        <dbReference type="Rhea" id="RHEA:40171"/>
        <dbReference type="ChEBI" id="CHEBI:15379"/>
        <dbReference type="ChEBI" id="CHEBI:16240"/>
        <dbReference type="ChEBI" id="CHEBI:57330"/>
        <dbReference type="ChEBI" id="CHEBI:57375"/>
    </reaction>
    <physiologicalReaction direction="left-to-right" evidence="2">
        <dbReference type="Rhea" id="RHEA:40172"/>
    </physiologicalReaction>
</comment>
<comment type="catalytic activity">
    <reaction evidence="2">
        <text>octanoyl-CoA + O2 = (2E)-octenoyl-CoA + H2O2</text>
        <dbReference type="Rhea" id="RHEA:40175"/>
        <dbReference type="ChEBI" id="CHEBI:15379"/>
        <dbReference type="ChEBI" id="CHEBI:16240"/>
        <dbReference type="ChEBI" id="CHEBI:57386"/>
        <dbReference type="ChEBI" id="CHEBI:62242"/>
    </reaction>
    <physiologicalReaction direction="left-to-right" evidence="2">
        <dbReference type="Rhea" id="RHEA:40176"/>
    </physiologicalReaction>
</comment>
<comment type="catalytic activity">
    <reaction evidence="2">
        <text>decanoyl-CoA + O2 = (2E)-decenoyl-CoA + H2O2</text>
        <dbReference type="Rhea" id="RHEA:40179"/>
        <dbReference type="ChEBI" id="CHEBI:15379"/>
        <dbReference type="ChEBI" id="CHEBI:16240"/>
        <dbReference type="ChEBI" id="CHEBI:61406"/>
        <dbReference type="ChEBI" id="CHEBI:61430"/>
    </reaction>
    <physiologicalReaction direction="left-to-right" evidence="2">
        <dbReference type="Rhea" id="RHEA:40180"/>
    </physiologicalReaction>
</comment>
<comment type="catalytic activity">
    <reaction evidence="2">
        <text>tetradecanoyl-CoA + O2 = (2E)-tetradecenoyl-CoA + H2O2</text>
        <dbReference type="Rhea" id="RHEA:40183"/>
        <dbReference type="ChEBI" id="CHEBI:15379"/>
        <dbReference type="ChEBI" id="CHEBI:16240"/>
        <dbReference type="ChEBI" id="CHEBI:57385"/>
        <dbReference type="ChEBI" id="CHEBI:61405"/>
    </reaction>
    <physiologicalReaction direction="left-to-right" evidence="2">
        <dbReference type="Rhea" id="RHEA:40184"/>
    </physiologicalReaction>
</comment>
<comment type="catalytic activity">
    <reaction evidence="2">
        <text>hexadecanedioyl-CoA + O2 = (2E)-hexadecenedioyl-CoA + H2O2</text>
        <dbReference type="Rhea" id="RHEA:40275"/>
        <dbReference type="ChEBI" id="CHEBI:15379"/>
        <dbReference type="ChEBI" id="CHEBI:16240"/>
        <dbReference type="ChEBI" id="CHEBI:77075"/>
        <dbReference type="ChEBI" id="CHEBI:77085"/>
    </reaction>
    <physiologicalReaction direction="left-to-right" evidence="2">
        <dbReference type="Rhea" id="RHEA:40276"/>
    </physiologicalReaction>
</comment>
<comment type="catalytic activity">
    <reaction evidence="1">
        <text>tetracosanoyl-CoA + O2 = (2E)-tetracosenoyl-CoA + H2O2</text>
        <dbReference type="Rhea" id="RHEA:40319"/>
        <dbReference type="ChEBI" id="CHEBI:15379"/>
        <dbReference type="ChEBI" id="CHEBI:16240"/>
        <dbReference type="ChEBI" id="CHEBI:65052"/>
        <dbReference type="ChEBI" id="CHEBI:74693"/>
    </reaction>
    <physiologicalReaction direction="left-to-right" evidence="1">
        <dbReference type="Rhea" id="RHEA:40320"/>
    </physiologicalReaction>
</comment>
<comment type="catalytic activity">
    <reaction evidence="1">
        <text>glutaryl-CoA + O2 = (2E)-glutaconyl-CoA + H2O2</text>
        <dbReference type="Rhea" id="RHEA:40315"/>
        <dbReference type="ChEBI" id="CHEBI:15379"/>
        <dbReference type="ChEBI" id="CHEBI:16240"/>
        <dbReference type="ChEBI" id="CHEBI:57353"/>
        <dbReference type="ChEBI" id="CHEBI:57378"/>
    </reaction>
    <physiologicalReaction direction="left-to-right" evidence="1">
        <dbReference type="Rhea" id="RHEA:40316"/>
    </physiologicalReaction>
</comment>
<comment type="catalytic activity">
    <reaction evidence="1">
        <text>hexanoyl-CoA + O2 = (2E)-hexenoyl-CoA + H2O2</text>
        <dbReference type="Rhea" id="RHEA:40311"/>
        <dbReference type="ChEBI" id="CHEBI:15379"/>
        <dbReference type="ChEBI" id="CHEBI:16240"/>
        <dbReference type="ChEBI" id="CHEBI:62077"/>
        <dbReference type="ChEBI" id="CHEBI:62620"/>
    </reaction>
    <physiologicalReaction direction="left-to-right" evidence="1">
        <dbReference type="Rhea" id="RHEA:40312"/>
    </physiologicalReaction>
</comment>
<comment type="catalytic activity">
    <reaction evidence="1">
        <text>octadecanoyl-CoA + O2 = (2E)-octadecenoyl-CoA + H2O2</text>
        <dbReference type="Rhea" id="RHEA:38971"/>
        <dbReference type="ChEBI" id="CHEBI:15379"/>
        <dbReference type="ChEBI" id="CHEBI:16240"/>
        <dbReference type="ChEBI" id="CHEBI:57394"/>
        <dbReference type="ChEBI" id="CHEBI:71412"/>
    </reaction>
    <physiologicalReaction direction="left-to-right" evidence="1">
        <dbReference type="Rhea" id="RHEA:38972"/>
    </physiologicalReaction>
</comment>
<comment type="catalytic activity">
    <reaction evidence="2">
        <text>(5Z,8Z,11Z,14Z,17Z)-eicosapentaenoyl-CoA + O2 = (2E,5Z,8Z,11Z,14Z,17Z)-icosahexaenoyl-CoA + H2O2</text>
        <dbReference type="Rhea" id="RHEA:69643"/>
        <dbReference type="ChEBI" id="CHEBI:15379"/>
        <dbReference type="ChEBI" id="CHEBI:16240"/>
        <dbReference type="ChEBI" id="CHEBI:73862"/>
        <dbReference type="ChEBI" id="CHEBI:187901"/>
    </reaction>
    <physiologicalReaction direction="left-to-right" evidence="2">
        <dbReference type="Rhea" id="RHEA:69644"/>
    </physiologicalReaction>
</comment>
<comment type="catalytic activity">
    <reaction evidence="3">
        <text>(6Z,9Z,12Z,15Z,18Z,21Z)-tetracosahexaenoyl-CoA + O2 = (2E,6Z,9Z,12Z,15Z,18Z,21Z)-tetracosaheptaenoyl-CoA + H2O2</text>
        <dbReference type="Rhea" id="RHEA:39119"/>
        <dbReference type="ChEBI" id="CHEBI:15379"/>
        <dbReference type="ChEBI" id="CHEBI:16240"/>
        <dbReference type="ChEBI" id="CHEBI:74086"/>
        <dbReference type="ChEBI" id="CHEBI:76360"/>
    </reaction>
    <physiologicalReaction direction="left-to-right" evidence="3">
        <dbReference type="Rhea" id="RHEA:39120"/>
    </physiologicalReaction>
</comment>
<comment type="cofactor">
    <cofactor evidence="1">
        <name>FAD</name>
        <dbReference type="ChEBI" id="CHEBI:57692"/>
    </cofactor>
</comment>
<comment type="pathway">
    <text>Lipid metabolism; peroxisomal fatty acid beta-oxidation.</text>
</comment>
<comment type="subunit">
    <text evidence="1 2">Homodimer (By similarity). Interacts with LONP2 (By similarity).</text>
</comment>
<comment type="subcellular location">
    <subcellularLocation>
        <location evidence="1">Peroxisome</location>
    </subcellularLocation>
</comment>
<comment type="similarity">
    <text evidence="6">Belongs to the acyl-CoA oxidase family.</text>
</comment>
<sequence length="661" mass="74390">MNPDLRRERAAATFNPELITHLLDGSPEKTRRRREIENKILSDPDFQHENHNFLTRSERYEAAIKKSAVMVKKMREFGIADPDEIMWFKRLLLGNFVEPVGLNYSMFIPTLLNQGTTAQQEKWLHPSTGLQIIGTYAQTEMGHGTHLRGLETTATYDPKTQEFIINSPTVTSIKWWPGGLGKTSNHAIVLAQLITQGKCYGLHAFIVPIREIGTHKPLPGITVGDIGPKFGYEEMDNGYLKMDNYRIPRENMLMKYAQVKPDGTYVKPVSNKLTYGTMVFVRSFLVGAAAQSLSKACTIAIRYSAVRHQSEIKPGEPEPQVLDFQTQQYKLFPILATAYAFQFVGSYMKDTYHRINESIGQGDLSELPELHALTAGLKAFTTWTANAGIEECRLACGGHGYSHCSGIPNIYVTFTPACTFEGENTVMMLQTARFLMKVYDQVQSGKLVHGLVSYLNDLPSQRIQPQQVAVWPTVVDINNPDSLTEIYKLRAARLIDIAAKSLQGEMSHRKSKEVAWNLTSVGLVRATDAHCHYVVVKLFADKLLKIQDKTIQAVLRNLFLLYSLYGISQKAGDFLQGNIMTGSQITQVNQRVLELLAVIRPNAVALVDAFDYKDITLGSVLGRYDGNVYENLFEWAKKSPLNKTEVHESYHKYLKPLQSKL</sequence>
<name>ACOX1_CAVPO</name>
<evidence type="ECO:0000250" key="1">
    <source>
        <dbReference type="UniProtKB" id="P07872"/>
    </source>
</evidence>
<evidence type="ECO:0000250" key="2">
    <source>
        <dbReference type="UniProtKB" id="Q15067"/>
    </source>
</evidence>
<evidence type="ECO:0000250" key="3">
    <source>
        <dbReference type="UniProtKB" id="Q9R0H0"/>
    </source>
</evidence>
<evidence type="ECO:0000255" key="4"/>
<evidence type="ECO:0000303" key="5">
    <source ref="1"/>
</evidence>
<evidence type="ECO:0000305" key="6"/>
<organism>
    <name type="scientific">Cavia porcellus</name>
    <name type="common">Guinea pig</name>
    <dbReference type="NCBI Taxonomy" id="10141"/>
    <lineage>
        <taxon>Eukaryota</taxon>
        <taxon>Metazoa</taxon>
        <taxon>Chordata</taxon>
        <taxon>Craniata</taxon>
        <taxon>Vertebrata</taxon>
        <taxon>Euteleostomi</taxon>
        <taxon>Mammalia</taxon>
        <taxon>Eutheria</taxon>
        <taxon>Euarchontoglires</taxon>
        <taxon>Glires</taxon>
        <taxon>Rodentia</taxon>
        <taxon>Hystricomorpha</taxon>
        <taxon>Caviidae</taxon>
        <taxon>Cavia</taxon>
    </lineage>
</organism>
<feature type="chain" id="PRO_0000204676" description="Peroxisomal acyl-CoA oxidase 1, A chain">
    <location>
        <begin position="1"/>
        <end position="661"/>
    </location>
</feature>
<feature type="chain" id="PRO_0000447498" description="Peroxisomal acyl-CoA oxidase 1, B chain" evidence="1">
    <location>
        <begin position="1"/>
        <end position="438"/>
    </location>
</feature>
<feature type="chain" id="PRO_0000447499" description="Peroxisomal acyl-CoA oxidase 1, C chain" evidence="1">
    <location>
        <begin position="439"/>
        <end position="661"/>
    </location>
</feature>
<feature type="short sequence motif" description="Microbody targeting signal" evidence="4">
    <location>
        <begin position="659"/>
        <end position="661"/>
    </location>
</feature>
<feature type="active site" description="Proton acceptor" evidence="1">
    <location>
        <position position="421"/>
    </location>
</feature>
<feature type="binding site" evidence="1">
    <location>
        <position position="139"/>
    </location>
    <ligand>
        <name>FAD</name>
        <dbReference type="ChEBI" id="CHEBI:57692"/>
    </ligand>
</feature>
<feature type="binding site" evidence="1">
    <location>
        <position position="178"/>
    </location>
    <ligand>
        <name>FAD</name>
        <dbReference type="ChEBI" id="CHEBI:57692"/>
    </ligand>
</feature>
<feature type="site" description="Cleavage" evidence="1">
    <location>
        <begin position="468"/>
        <end position="469"/>
    </location>
</feature>
<feature type="modified residue" description="Phosphoserine" evidence="2">
    <location>
        <position position="26"/>
    </location>
</feature>
<feature type="modified residue" description="N6-acetyllysine" evidence="3">
    <location>
        <position position="65"/>
    </location>
</feature>
<feature type="modified residue" description="N6-succinyllysine" evidence="3">
    <location>
        <position position="89"/>
    </location>
</feature>
<feature type="modified residue" description="N6-succinyllysine" evidence="3">
    <location>
        <position position="159"/>
    </location>
</feature>
<feature type="modified residue" description="N6-acetyllysine" evidence="3">
    <location>
        <position position="216"/>
    </location>
</feature>
<feature type="modified residue" description="N6-succinyllysine" evidence="3">
    <location>
        <position position="241"/>
    </location>
</feature>
<feature type="modified residue" description="N6-acetyllysine" evidence="2">
    <location>
        <position position="255"/>
    </location>
</feature>
<feature type="modified residue" description="N6-acetyllysine" evidence="2">
    <location>
        <position position="267"/>
    </location>
</feature>
<feature type="modified residue" description="N6-acetyllysine" evidence="3">
    <location>
        <position position="272"/>
    </location>
</feature>
<feature type="modified residue" description="N6-succinyllysine" evidence="3">
    <location>
        <position position="349"/>
    </location>
</feature>
<feature type="modified residue" description="N6-acetyllysine; alternate" evidence="2">
    <location>
        <position position="437"/>
    </location>
</feature>
<feature type="modified residue" description="N6-succinyllysine; alternate" evidence="3">
    <location>
        <position position="437"/>
    </location>
</feature>
<feature type="modified residue" description="N6-acetyllysine; alternate" evidence="3">
    <location>
        <position position="446"/>
    </location>
</feature>
<feature type="modified residue" description="N6-succinyllysine; alternate" evidence="3">
    <location>
        <position position="446"/>
    </location>
</feature>
<feature type="modified residue" description="N6-acetyllysine" evidence="2">
    <location>
        <position position="500"/>
    </location>
</feature>
<feature type="modified residue" description="N6-acetyllysine; alternate" evidence="3">
    <location>
        <position position="512"/>
    </location>
</feature>
<feature type="modified residue" description="N6-succinyllysine; alternate" evidence="3">
    <location>
        <position position="512"/>
    </location>
</feature>
<feature type="modified residue" description="N6-succinyllysine" evidence="3">
    <location>
        <position position="542"/>
    </location>
</feature>
<feature type="modified residue" description="N6-acetyllysine; alternate" evidence="3">
    <location>
        <position position="637"/>
    </location>
</feature>
<feature type="modified residue" description="N6-succinyllysine; alternate" evidence="3">
    <location>
        <position position="637"/>
    </location>
</feature>
<feature type="modified residue" description="N6-succinyllysine" evidence="3">
    <location>
        <position position="643"/>
    </location>
</feature>
<feature type="modified residue" description="Phosphoserine" evidence="3">
    <location>
        <position position="649"/>
    </location>
</feature>
<feature type="modified residue" description="N6-acetyllysine" evidence="3">
    <location>
        <position position="652"/>
    </location>
</feature>
<feature type="modified residue" description="N6-succinyllysine" evidence="3">
    <location>
        <position position="655"/>
    </location>
</feature>
<proteinExistence type="evidence at transcript level"/>
<keyword id="KW-0007">Acetylation</keyword>
<keyword id="KW-0274">FAD</keyword>
<keyword id="KW-0276">Fatty acid metabolism</keyword>
<keyword id="KW-0285">Flavoprotein</keyword>
<keyword id="KW-0443">Lipid metabolism</keyword>
<keyword id="KW-0560">Oxidoreductase</keyword>
<keyword id="KW-0576">Peroxisome</keyword>
<keyword id="KW-0597">Phosphoprotein</keyword>
<keyword id="KW-1185">Reference proteome</keyword>
<dbReference type="EC" id="1.3.3.6" evidence="1"/>
<dbReference type="EMBL" id="AJ005112">
    <property type="protein sequence ID" value="CAA06376.1"/>
    <property type="molecule type" value="mRNA"/>
</dbReference>
<dbReference type="RefSeq" id="NP_001166377.1">
    <property type="nucleotide sequence ID" value="NM_001172906.1"/>
</dbReference>
<dbReference type="SMR" id="Q9Z1N0"/>
<dbReference type="FunCoup" id="Q9Z1N0">
    <property type="interactions" value="2571"/>
</dbReference>
<dbReference type="STRING" id="10141.ENSCPOP00000013650"/>
<dbReference type="GeneID" id="100135467"/>
<dbReference type="KEGG" id="cpoc:100135467"/>
<dbReference type="CTD" id="51"/>
<dbReference type="eggNOG" id="KOG0136">
    <property type="taxonomic scope" value="Eukaryota"/>
</dbReference>
<dbReference type="HOGENOM" id="CLU_014629_3_1_1"/>
<dbReference type="InParanoid" id="Q9Z1N0"/>
<dbReference type="OrthoDB" id="538336at2759"/>
<dbReference type="UniPathway" id="UPA00661"/>
<dbReference type="Proteomes" id="UP000005447">
    <property type="component" value="Unassembled WGS sequence"/>
</dbReference>
<dbReference type="GO" id="GO:0005777">
    <property type="term" value="C:peroxisome"/>
    <property type="evidence" value="ECO:0000250"/>
    <property type="project" value="UniProtKB"/>
</dbReference>
<dbReference type="GO" id="GO:0003997">
    <property type="term" value="F:acyl-CoA oxidase activity"/>
    <property type="evidence" value="ECO:0000250"/>
    <property type="project" value="UniProtKB"/>
</dbReference>
<dbReference type="GO" id="GO:0071949">
    <property type="term" value="F:FAD binding"/>
    <property type="evidence" value="ECO:0007669"/>
    <property type="project" value="InterPro"/>
</dbReference>
<dbReference type="GO" id="GO:0005504">
    <property type="term" value="F:fatty acid binding"/>
    <property type="evidence" value="ECO:0007669"/>
    <property type="project" value="InterPro"/>
</dbReference>
<dbReference type="GO" id="GO:0016401">
    <property type="term" value="F:palmitoyl-CoA oxidase activity"/>
    <property type="evidence" value="ECO:0007669"/>
    <property type="project" value="TreeGrafter"/>
</dbReference>
<dbReference type="GO" id="GO:0033540">
    <property type="term" value="P:fatty acid beta-oxidation using acyl-CoA oxidase"/>
    <property type="evidence" value="ECO:0007669"/>
    <property type="project" value="UniProtKB-UniPathway"/>
</dbReference>
<dbReference type="GO" id="GO:0019395">
    <property type="term" value="P:fatty acid oxidation"/>
    <property type="evidence" value="ECO:0000250"/>
    <property type="project" value="UniProtKB"/>
</dbReference>
<dbReference type="GO" id="GO:0006091">
    <property type="term" value="P:generation of precursor metabolites and energy"/>
    <property type="evidence" value="ECO:0000250"/>
    <property type="project" value="UniProtKB"/>
</dbReference>
<dbReference type="GO" id="GO:0055088">
    <property type="term" value="P:lipid homeostasis"/>
    <property type="evidence" value="ECO:0007669"/>
    <property type="project" value="TreeGrafter"/>
</dbReference>
<dbReference type="GO" id="GO:0006629">
    <property type="term" value="P:lipid metabolic process"/>
    <property type="evidence" value="ECO:0000250"/>
    <property type="project" value="UniProtKB"/>
</dbReference>
<dbReference type="GO" id="GO:0006693">
    <property type="term" value="P:prostaglandin metabolic process"/>
    <property type="evidence" value="ECO:0000250"/>
    <property type="project" value="UniProtKB"/>
</dbReference>
<dbReference type="GO" id="GO:0000038">
    <property type="term" value="P:very long-chain fatty acid metabolic process"/>
    <property type="evidence" value="ECO:0007669"/>
    <property type="project" value="TreeGrafter"/>
</dbReference>
<dbReference type="CDD" id="cd01150">
    <property type="entry name" value="AXO"/>
    <property type="match status" value="1"/>
</dbReference>
<dbReference type="FunFam" id="1.10.540.10:FF:000006">
    <property type="entry name" value="Acyl-coenzyme A oxidase"/>
    <property type="match status" value="1"/>
</dbReference>
<dbReference type="FunFam" id="1.20.140.10:FF:000005">
    <property type="entry name" value="Acyl-coenzyme A oxidase"/>
    <property type="match status" value="1"/>
</dbReference>
<dbReference type="FunFam" id="1.20.140.10:FF:000007">
    <property type="entry name" value="Acyl-coenzyme A oxidase"/>
    <property type="match status" value="1"/>
</dbReference>
<dbReference type="FunFam" id="2.40.110.10:FF:000003">
    <property type="entry name" value="Acyl-coenzyme A oxidase"/>
    <property type="match status" value="1"/>
</dbReference>
<dbReference type="Gene3D" id="1.10.540.10">
    <property type="entry name" value="Acyl-CoA dehydrogenase/oxidase, N-terminal domain"/>
    <property type="match status" value="1"/>
</dbReference>
<dbReference type="Gene3D" id="2.40.110.10">
    <property type="entry name" value="Butyryl-CoA Dehydrogenase, subunit A, domain 2"/>
    <property type="match status" value="1"/>
</dbReference>
<dbReference type="Gene3D" id="1.20.140.10">
    <property type="entry name" value="Butyryl-CoA Dehydrogenase, subunit A, domain 3"/>
    <property type="match status" value="2"/>
</dbReference>
<dbReference type="InterPro" id="IPR034171">
    <property type="entry name" value="ACO"/>
</dbReference>
<dbReference type="InterPro" id="IPR055060">
    <property type="entry name" value="ACOX_C_alpha1"/>
</dbReference>
<dbReference type="InterPro" id="IPR029320">
    <property type="entry name" value="Acyl-CoA_ox_N"/>
</dbReference>
<dbReference type="InterPro" id="IPR006091">
    <property type="entry name" value="Acyl-CoA_Oxase/DH_mid-dom"/>
</dbReference>
<dbReference type="InterPro" id="IPR046373">
    <property type="entry name" value="Acyl-CoA_Oxase/DH_mid-dom_sf"/>
</dbReference>
<dbReference type="InterPro" id="IPR012258">
    <property type="entry name" value="Acyl-CoA_oxidase"/>
</dbReference>
<dbReference type="InterPro" id="IPR002655">
    <property type="entry name" value="Acyl-CoA_oxidase_C"/>
</dbReference>
<dbReference type="InterPro" id="IPR036250">
    <property type="entry name" value="AcylCo_DH-like_C"/>
</dbReference>
<dbReference type="InterPro" id="IPR037069">
    <property type="entry name" value="AcylCoA_DH/ox_N_sf"/>
</dbReference>
<dbReference type="InterPro" id="IPR009100">
    <property type="entry name" value="AcylCoA_DH/oxidase_NM_dom_sf"/>
</dbReference>
<dbReference type="PANTHER" id="PTHR10909">
    <property type="entry name" value="ELECTRON TRANSPORT OXIDOREDUCTASE"/>
    <property type="match status" value="1"/>
</dbReference>
<dbReference type="PANTHER" id="PTHR10909:SF250">
    <property type="entry name" value="PEROXISOMAL ACYL-COENZYME A OXIDASE 1"/>
    <property type="match status" value="1"/>
</dbReference>
<dbReference type="Pfam" id="PF01756">
    <property type="entry name" value="ACOX"/>
    <property type="match status" value="1"/>
</dbReference>
<dbReference type="Pfam" id="PF22924">
    <property type="entry name" value="ACOX_C_alpha1"/>
    <property type="match status" value="1"/>
</dbReference>
<dbReference type="Pfam" id="PF02770">
    <property type="entry name" value="Acyl-CoA_dh_M"/>
    <property type="match status" value="1"/>
</dbReference>
<dbReference type="Pfam" id="PF14749">
    <property type="entry name" value="Acyl-CoA_ox_N"/>
    <property type="match status" value="1"/>
</dbReference>
<dbReference type="PIRSF" id="PIRSF000168">
    <property type="entry name" value="Acyl-CoA_oxidase"/>
    <property type="match status" value="1"/>
</dbReference>
<dbReference type="SUPFAM" id="SSF47203">
    <property type="entry name" value="Acyl-CoA dehydrogenase C-terminal domain-like"/>
    <property type="match status" value="2"/>
</dbReference>
<dbReference type="SUPFAM" id="SSF56645">
    <property type="entry name" value="Acyl-CoA dehydrogenase NM domain-like"/>
    <property type="match status" value="1"/>
</dbReference>